<comment type="function">
    <text evidence="1">NF-kappa-B is a pleiotropic transcription factor present in almost all cell types and is the endpoint of a series of signal transduction events that are initiated by a vast array of stimuli related to many biological processes such as inflammation, immunity, differentiation, cell growth, tumorigenesis and apoptosis. NF-kappa-B is a homo- or heterodimeric complex formed by the Rel-like domain-containing proteins. The dimers bind at kappa-B sites in the DNA of their target genes and the individual dimers have distinct preferences for different kappa-B sites that they can bind with distinguishable affinity and specificity. Different dimer combinations act as transcriptional activators or repressors, respectively. NF-kappa-B is controlled by various mechanisms of post-translational modification and subcellular compartmentalization as well as by interactions with other cofactors or corepressors. NF-kappa-B complexes are held in the cytoplasm in an inactive state complexed with members of the NF-kappa-B inhibitor (I-kappa-B) family. In a conventional activation pathway, I-kappa-B is phosphorylated by I-kappa-B kinases (IKKs) in response to different activators, subsequently degraded thus liberating the active NF-kappa-B complex which translocates to the nucleus. RELA shows a weak DNA-binding site which could contribute directly to DNA binding in the NF-kappa-B complex.</text>
</comment>
<comment type="subcellular location">
    <subcellularLocation>
        <location evidence="2">Nucleus</location>
    </subcellularLocation>
    <subcellularLocation>
        <location evidence="2">Cytoplasm</location>
    </subcellularLocation>
    <text evidence="1">Nuclear, but also found in the cytoplasm in an inactive form complexed to an inhibitor (I-kappa-B).</text>
</comment>
<comment type="tissue specificity">
    <text evidence="5">Predominantly in the animal hemisphere of the oocyte; all tissues of early embryo.</text>
</comment>
<comment type="developmental stage">
    <text evidence="5">Oocyte and early embryo.</text>
</comment>
<comment type="domain">
    <text evidence="1 2">The transcriptional activation domain 1/TA1 and the transcriptional activation domain 2/TA2 have direct transcriptional activation properties (By similarity). The 9aaTAD motif found within the transcriptional activation domain 2 is a conserved motif present in a large number of transcription factors that is required for their transcriptional transactivation activity (By similarity).</text>
</comment>
<dbReference type="EMBL" id="M60785">
    <property type="protein sequence ID" value="AAA49945.1"/>
    <property type="molecule type" value="mRNA"/>
</dbReference>
<dbReference type="PIR" id="A38631">
    <property type="entry name" value="A38631"/>
</dbReference>
<dbReference type="RefSeq" id="NP_001081048.1">
    <property type="nucleotide sequence ID" value="NM_001087579.1"/>
</dbReference>
<dbReference type="SMR" id="Q04865"/>
<dbReference type="BioGRID" id="98955">
    <property type="interactions" value="1"/>
</dbReference>
<dbReference type="DNASU" id="394353"/>
<dbReference type="GeneID" id="394353"/>
<dbReference type="KEGG" id="xla:394353"/>
<dbReference type="AGR" id="Xenbase:XB-GENE-946512"/>
<dbReference type="CTD" id="394353"/>
<dbReference type="Xenbase" id="XB-GENE-946512">
    <property type="gene designation" value="rela.L"/>
</dbReference>
<dbReference type="OrthoDB" id="7881762at2759"/>
<dbReference type="Proteomes" id="UP000186698">
    <property type="component" value="Chromosome 4L"/>
</dbReference>
<dbReference type="Bgee" id="394353">
    <property type="expression patterns" value="Expressed in lung and 19 other cell types or tissues"/>
</dbReference>
<dbReference type="GO" id="GO:0005737">
    <property type="term" value="C:cytoplasm"/>
    <property type="evidence" value="ECO:0000250"/>
    <property type="project" value="UniProtKB"/>
</dbReference>
<dbReference type="GO" id="GO:0035525">
    <property type="term" value="C:NF-kappaB p50/p65 complex"/>
    <property type="evidence" value="ECO:0000318"/>
    <property type="project" value="GO_Central"/>
</dbReference>
<dbReference type="GO" id="GO:0005634">
    <property type="term" value="C:nucleus"/>
    <property type="evidence" value="ECO:0000250"/>
    <property type="project" value="UniProtKB"/>
</dbReference>
<dbReference type="GO" id="GO:0003677">
    <property type="term" value="F:DNA binding"/>
    <property type="evidence" value="ECO:0000250"/>
    <property type="project" value="UniProtKB"/>
</dbReference>
<dbReference type="GO" id="GO:0000981">
    <property type="term" value="F:DNA-binding transcription factor activity, RNA polymerase II-specific"/>
    <property type="evidence" value="ECO:0000318"/>
    <property type="project" value="GO_Central"/>
</dbReference>
<dbReference type="GO" id="GO:0000978">
    <property type="term" value="F:RNA polymerase II cis-regulatory region sequence-specific DNA binding"/>
    <property type="evidence" value="ECO:0000318"/>
    <property type="project" value="GO_Central"/>
</dbReference>
<dbReference type="GO" id="GO:0007249">
    <property type="term" value="P:canonical NF-kappaB signal transduction"/>
    <property type="evidence" value="ECO:0000318"/>
    <property type="project" value="GO_Central"/>
</dbReference>
<dbReference type="GO" id="GO:0070301">
    <property type="term" value="P:cellular response to hydrogen peroxide"/>
    <property type="evidence" value="ECO:0000250"/>
    <property type="project" value="UniProtKB"/>
</dbReference>
<dbReference type="GO" id="GO:0071222">
    <property type="term" value="P:cellular response to lipopolysaccharide"/>
    <property type="evidence" value="ECO:0000318"/>
    <property type="project" value="GO_Central"/>
</dbReference>
<dbReference type="GO" id="GO:0071356">
    <property type="term" value="P:cellular response to tumor necrosis factor"/>
    <property type="evidence" value="ECO:0000250"/>
    <property type="project" value="UniProtKB"/>
</dbReference>
<dbReference type="GO" id="GO:0006954">
    <property type="term" value="P:inflammatory response"/>
    <property type="evidence" value="ECO:0000318"/>
    <property type="project" value="GO_Central"/>
</dbReference>
<dbReference type="GO" id="GO:0045087">
    <property type="term" value="P:innate immune response"/>
    <property type="evidence" value="ECO:0000318"/>
    <property type="project" value="GO_Central"/>
</dbReference>
<dbReference type="GO" id="GO:0043066">
    <property type="term" value="P:negative regulation of apoptotic process"/>
    <property type="evidence" value="ECO:0000250"/>
    <property type="project" value="UniProtKB"/>
</dbReference>
<dbReference type="GO" id="GO:0038061">
    <property type="term" value="P:non-canonical NF-kappaB signal transduction"/>
    <property type="evidence" value="ECO:0000318"/>
    <property type="project" value="GO_Central"/>
</dbReference>
<dbReference type="GO" id="GO:0043123">
    <property type="term" value="P:positive regulation of canonical NF-kappaB signal transduction"/>
    <property type="evidence" value="ECO:0000250"/>
    <property type="project" value="UniProtKB"/>
</dbReference>
<dbReference type="GO" id="GO:0008284">
    <property type="term" value="P:positive regulation of cell population proliferation"/>
    <property type="evidence" value="ECO:0000250"/>
    <property type="project" value="UniProtKB"/>
</dbReference>
<dbReference type="GO" id="GO:0051092">
    <property type="term" value="P:positive regulation of NF-kappaB transcription factor activity"/>
    <property type="evidence" value="ECO:0000250"/>
    <property type="project" value="UniProtKB"/>
</dbReference>
<dbReference type="GO" id="GO:0045944">
    <property type="term" value="P:positive regulation of transcription by RNA polymerase II"/>
    <property type="evidence" value="ECO:0000250"/>
    <property type="project" value="UniProtKB"/>
</dbReference>
<dbReference type="GO" id="GO:0034097">
    <property type="term" value="P:response to cytokine"/>
    <property type="evidence" value="ECO:0000318"/>
    <property type="project" value="GO_Central"/>
</dbReference>
<dbReference type="CDD" id="cd01177">
    <property type="entry name" value="IPT_NFkappaB"/>
    <property type="match status" value="1"/>
</dbReference>
<dbReference type="CDD" id="cd07885">
    <property type="entry name" value="RHD-n_RelA"/>
    <property type="match status" value="1"/>
</dbReference>
<dbReference type="FunFam" id="2.60.40.340:FF:000003">
    <property type="entry name" value="NFkB p65 transcription factor"/>
    <property type="match status" value="1"/>
</dbReference>
<dbReference type="FunFam" id="2.60.40.10:FF:000046">
    <property type="entry name" value="Nuclear factor NF-kappa-B p105 subunit"/>
    <property type="match status" value="1"/>
</dbReference>
<dbReference type="Gene3D" id="2.60.40.10">
    <property type="entry name" value="Immunoglobulins"/>
    <property type="match status" value="1"/>
</dbReference>
<dbReference type="Gene3D" id="2.60.40.340">
    <property type="entry name" value="Rel homology domain (RHD), DNA-binding domain"/>
    <property type="match status" value="1"/>
</dbReference>
<dbReference type="InterPro" id="IPR013783">
    <property type="entry name" value="Ig-like_fold"/>
</dbReference>
<dbReference type="InterPro" id="IPR014756">
    <property type="entry name" value="Ig_E-set"/>
</dbReference>
<dbReference type="InterPro" id="IPR002909">
    <property type="entry name" value="IPT_dom"/>
</dbReference>
<dbReference type="InterPro" id="IPR033926">
    <property type="entry name" value="IPT_NFkappaB"/>
</dbReference>
<dbReference type="InterPro" id="IPR000451">
    <property type="entry name" value="NFkB/Dor"/>
</dbReference>
<dbReference type="InterPro" id="IPR008967">
    <property type="entry name" value="p53-like_TF_DNA-bd_sf"/>
</dbReference>
<dbReference type="InterPro" id="IPR030495">
    <property type="entry name" value="RelA_RHD_N"/>
</dbReference>
<dbReference type="InterPro" id="IPR030492">
    <property type="entry name" value="RHD_CS"/>
</dbReference>
<dbReference type="InterPro" id="IPR032397">
    <property type="entry name" value="RHD_dimer"/>
</dbReference>
<dbReference type="InterPro" id="IPR011539">
    <property type="entry name" value="RHD_DNA_bind_dom"/>
</dbReference>
<dbReference type="InterPro" id="IPR037059">
    <property type="entry name" value="RHD_DNA_bind_dom_sf"/>
</dbReference>
<dbReference type="PANTHER" id="PTHR24169">
    <property type="entry name" value="NUCLEAR FACTOR NF-KAPPA-B PROTEIN"/>
    <property type="match status" value="1"/>
</dbReference>
<dbReference type="PANTHER" id="PTHR24169:SF1">
    <property type="entry name" value="TRANSCRIPTION FACTOR P65"/>
    <property type="match status" value="1"/>
</dbReference>
<dbReference type="Pfam" id="PF16179">
    <property type="entry name" value="RHD_dimer"/>
    <property type="match status" value="1"/>
</dbReference>
<dbReference type="Pfam" id="PF00554">
    <property type="entry name" value="RHD_DNA_bind"/>
    <property type="match status" value="1"/>
</dbReference>
<dbReference type="PRINTS" id="PR00057">
    <property type="entry name" value="NFKBTNSCPFCT"/>
</dbReference>
<dbReference type="SMART" id="SM00429">
    <property type="entry name" value="IPT"/>
    <property type="match status" value="1"/>
</dbReference>
<dbReference type="SUPFAM" id="SSF81296">
    <property type="entry name" value="E set domains"/>
    <property type="match status" value="1"/>
</dbReference>
<dbReference type="SUPFAM" id="SSF49417">
    <property type="entry name" value="p53-like transcription factors"/>
    <property type="match status" value="1"/>
</dbReference>
<dbReference type="PROSITE" id="PS01204">
    <property type="entry name" value="REL_1"/>
    <property type="match status" value="1"/>
</dbReference>
<dbReference type="PROSITE" id="PS50254">
    <property type="entry name" value="REL_2"/>
    <property type="match status" value="1"/>
</dbReference>
<evidence type="ECO:0000250" key="1">
    <source>
        <dbReference type="UniProtKB" id="Q04206"/>
    </source>
</evidence>
<evidence type="ECO:0000250" key="2">
    <source>
        <dbReference type="UniProtKB" id="Q04207"/>
    </source>
</evidence>
<evidence type="ECO:0000255" key="3"/>
<evidence type="ECO:0000255" key="4">
    <source>
        <dbReference type="PROSITE-ProRule" id="PRU00265"/>
    </source>
</evidence>
<evidence type="ECO:0000269" key="5">
    <source>
    </source>
</evidence>
<keyword id="KW-0010">Activator</keyword>
<keyword id="KW-0963">Cytoplasm</keyword>
<keyword id="KW-0238">DNA-binding</keyword>
<keyword id="KW-0539">Nucleus</keyword>
<keyword id="KW-0597">Phosphoprotein</keyword>
<keyword id="KW-1185">Reference proteome</keyword>
<keyword id="KW-0804">Transcription</keyword>
<keyword id="KW-0805">Transcription regulation</keyword>
<feature type="chain" id="PRO_0000205172" description="Putative transcription factor p65 homolog">
    <location>
        <begin position="1"/>
        <end position="527"/>
    </location>
</feature>
<feature type="domain" description="RHD" evidence="4">
    <location>
        <begin position="18"/>
        <end position="306"/>
    </location>
</feature>
<feature type="region of interest" description="Transcriptional activation domain 1" evidence="2">
    <location>
        <begin position="381"/>
        <end position="444"/>
    </location>
</feature>
<feature type="region of interest" description="Transcriptional activation domain 2" evidence="2">
    <location>
        <begin position="494"/>
        <end position="527"/>
    </location>
</feature>
<feature type="short sequence motif" description="Nuclear localization signal" evidence="3">
    <location>
        <begin position="301"/>
        <end position="304"/>
    </location>
</feature>
<feature type="short sequence motif" description="9aaTAD" evidence="3">
    <location>
        <begin position="513"/>
        <end position="521"/>
    </location>
</feature>
<feature type="modified residue" description="Phosphoserine; by PKA" evidence="3">
    <location>
        <position position="276"/>
    </location>
</feature>
<protein>
    <recommendedName>
        <fullName>Putative transcription factor p65 homolog</fullName>
    </recommendedName>
    <alternativeName>
        <fullName>XRel1</fullName>
    </alternativeName>
</protein>
<organism>
    <name type="scientific">Xenopus laevis</name>
    <name type="common">African clawed frog</name>
    <dbReference type="NCBI Taxonomy" id="8355"/>
    <lineage>
        <taxon>Eukaryota</taxon>
        <taxon>Metazoa</taxon>
        <taxon>Chordata</taxon>
        <taxon>Craniata</taxon>
        <taxon>Vertebrata</taxon>
        <taxon>Euteleostomi</taxon>
        <taxon>Amphibia</taxon>
        <taxon>Batrachia</taxon>
        <taxon>Anura</taxon>
        <taxon>Pipoidea</taxon>
        <taxon>Pipidae</taxon>
        <taxon>Xenopodinae</taxon>
        <taxon>Xenopus</taxon>
        <taxon>Xenopus</taxon>
    </lineage>
</organism>
<gene>
    <name type="primary">rela</name>
    <name type="synonym">rel1</name>
</gene>
<reference key="1">
    <citation type="journal article" date="1991" name="Proc. Natl. Acad. Sci. U.S.A.">
        <title>Expression of a mRNA related to c-rel and dorsal in early Xenopus laevis embryos.</title>
        <authorList>
            <person name="Kao K.R."/>
            <person name="Hopwood N.D."/>
        </authorList>
    </citation>
    <scope>NUCLEOTIDE SEQUENCE [MRNA]</scope>
    <scope>TISSUE SPECIFICITY</scope>
    <scope>DEVELOPMENTAL STAGE</scope>
</reference>
<accession>Q04865</accession>
<name>TF65_XENLA</name>
<sequence length="527" mass="59059">MDGFHWTDIVSSMPPSIPPVEIIEQPKQRGMRFRYKCEGRSAGSIPGERSTDTSKTHPTIKINNYQGPARIRISLVTKDSPHKPHPHELVGKDCKDGYYEAELSPDRSIHSFQNLGIQCVKKREVEDAVAHRIRTNNNPFNVSPEELKADYDLNTVCLCFQVFIPDQAAGRMLPLPFVVSQPIYDNRAPNTAELKICRVNKNSGSCLGGDEIFLLCDKVQKEDIEVIFGLGNWEARGIFSQADVHRQVAIVFRTPAFQDTKIRQSVKVQMQLRRPSDKEVSEPMEFQYLPDEGDPHHIDEKRKRTLDNFKHYVKNNPFAGGETRPQRRIAVANRNVPTKSEPIRPSIPVPNPVVSCLPFSMPVLKAENVTSPSTLLSTVNISDFSNLGFSSQPPSQSDHDRLESMLNYPSFPGDANLDLVEMLPHENESRCTSLSSIDNSDFSQLLSESQSSGTLSAALQEPGTSQGTFMAYPESIARLMTNRPNEDEGGERIDSGLINGMFDISREEIHLTSLFELDFSSLLSNMK</sequence>
<proteinExistence type="evidence at transcript level"/>